<feature type="chain" id="PRO_0000223790" description="Acetyl-coenzyme A carboxylase carboxyl transferase subunit alpha">
    <location>
        <begin position="1"/>
        <end position="319"/>
    </location>
</feature>
<feature type="domain" description="CoA carboxyltransferase C-terminal" evidence="2">
    <location>
        <begin position="39"/>
        <end position="293"/>
    </location>
</feature>
<gene>
    <name evidence="1" type="primary">accA1</name>
    <name type="ordered locus">NMB1139</name>
</gene>
<gene>
    <name evidence="1" type="primary">accA2</name>
    <name type="ordered locus">NMB1177</name>
</gene>
<accession>Q9JRV8</accession>
<comment type="function">
    <text evidence="1">Component of the acetyl coenzyme A carboxylase (ACC) complex. First, biotin carboxylase catalyzes the carboxylation of biotin on its carrier protein (BCCP) and then the CO(2) group is transferred by the carboxyltransferase to acetyl-CoA to form malonyl-CoA.</text>
</comment>
<comment type="catalytic activity">
    <reaction evidence="1">
        <text>N(6)-carboxybiotinyl-L-lysyl-[protein] + acetyl-CoA = N(6)-biotinyl-L-lysyl-[protein] + malonyl-CoA</text>
        <dbReference type="Rhea" id="RHEA:54728"/>
        <dbReference type="Rhea" id="RHEA-COMP:10505"/>
        <dbReference type="Rhea" id="RHEA-COMP:10506"/>
        <dbReference type="ChEBI" id="CHEBI:57288"/>
        <dbReference type="ChEBI" id="CHEBI:57384"/>
        <dbReference type="ChEBI" id="CHEBI:83144"/>
        <dbReference type="ChEBI" id="CHEBI:83145"/>
        <dbReference type="EC" id="2.1.3.15"/>
    </reaction>
</comment>
<comment type="pathway">
    <text evidence="1">Lipid metabolism; malonyl-CoA biosynthesis; malonyl-CoA from acetyl-CoA: step 1/1.</text>
</comment>
<comment type="subunit">
    <text evidence="1">Acetyl-CoA carboxylase is a heterohexamer composed of biotin carboxyl carrier protein (AccB), biotin carboxylase (AccC) and two subunits each of ACCase subunit alpha (AccA) and ACCase subunit beta (AccD).</text>
</comment>
<comment type="subcellular location">
    <subcellularLocation>
        <location evidence="1">Cytoplasm</location>
    </subcellularLocation>
</comment>
<comment type="similarity">
    <text evidence="1">Belongs to the AccA family.</text>
</comment>
<name>ACCA_NEIMB</name>
<sequence>MKPVFLDFEQPIAELTNKIDELRFVQDESAVDISDEIHRLQKKSNDLTKSIFSKLTPAQISQVSRHPQRPYTLDYIEALFTDFEELHGDRHFADDYAIVGGLARFNGQSVMVVGHQKGRDTKEKIRRNFGMPRPEGYRKALRLMKTAEKFGLPVMTFIDTPGAYPGIGAEERGQSEAIGKNLYELTRLRVPVLCTVIGEGGSGGALAVALGDYVNMLQYSTYSVISPEGCASILWKTAEKAADAAQALGITADRLQKLDLVDTVIKEPLGGAHRDFGQTMKNVKAVLEKQLHEAQSIPLADLLSRRFDRIMAYGKFSEQ</sequence>
<organism>
    <name type="scientific">Neisseria meningitidis serogroup B (strain ATCC BAA-335 / MC58)</name>
    <dbReference type="NCBI Taxonomy" id="122586"/>
    <lineage>
        <taxon>Bacteria</taxon>
        <taxon>Pseudomonadati</taxon>
        <taxon>Pseudomonadota</taxon>
        <taxon>Betaproteobacteria</taxon>
        <taxon>Neisseriales</taxon>
        <taxon>Neisseriaceae</taxon>
        <taxon>Neisseria</taxon>
    </lineage>
</organism>
<dbReference type="EC" id="2.1.3.15" evidence="1"/>
<dbReference type="EMBL" id="AE002098">
    <property type="protein sequence ID" value="AAF41562.1"/>
    <property type="molecule type" value="Genomic_DNA"/>
</dbReference>
<dbReference type="EMBL" id="AE002098">
    <property type="protein sequence ID" value="AAF41527.1"/>
    <property type="molecule type" value="Genomic_DNA"/>
</dbReference>
<dbReference type="PIR" id="B81119">
    <property type="entry name" value="B81119"/>
</dbReference>
<dbReference type="RefSeq" id="NP_274168.1">
    <property type="nucleotide sequence ID" value="NC_003112.2"/>
</dbReference>
<dbReference type="RefSeq" id="NP_274204.1">
    <property type="nucleotide sequence ID" value="NC_003112.2"/>
</dbReference>
<dbReference type="RefSeq" id="WP_010980898.1">
    <property type="nucleotide sequence ID" value="NC_003112.2"/>
</dbReference>
<dbReference type="SMR" id="Q9JRV8"/>
<dbReference type="FunCoup" id="Q9JRV8">
    <property type="interactions" value="474"/>
</dbReference>
<dbReference type="STRING" id="122586.NMB1139"/>
<dbReference type="PaxDb" id="122586-NMB1139"/>
<dbReference type="KEGG" id="nme:NMB1139"/>
<dbReference type="KEGG" id="nme:NMB1177"/>
<dbReference type="PATRIC" id="fig|122586.8.peg.1442"/>
<dbReference type="HOGENOM" id="CLU_015486_0_2_4"/>
<dbReference type="InParanoid" id="Q9JRV8"/>
<dbReference type="OrthoDB" id="9808023at2"/>
<dbReference type="UniPathway" id="UPA00655">
    <property type="reaction ID" value="UER00711"/>
</dbReference>
<dbReference type="Proteomes" id="UP000000425">
    <property type="component" value="Chromosome"/>
</dbReference>
<dbReference type="GO" id="GO:0009317">
    <property type="term" value="C:acetyl-CoA carboxylase complex"/>
    <property type="evidence" value="ECO:0007669"/>
    <property type="project" value="InterPro"/>
</dbReference>
<dbReference type="GO" id="GO:0003989">
    <property type="term" value="F:acetyl-CoA carboxylase activity"/>
    <property type="evidence" value="ECO:0007669"/>
    <property type="project" value="InterPro"/>
</dbReference>
<dbReference type="GO" id="GO:0005524">
    <property type="term" value="F:ATP binding"/>
    <property type="evidence" value="ECO:0007669"/>
    <property type="project" value="UniProtKB-KW"/>
</dbReference>
<dbReference type="GO" id="GO:0016743">
    <property type="term" value="F:carboxyl- or carbamoyltransferase activity"/>
    <property type="evidence" value="ECO:0007669"/>
    <property type="project" value="UniProtKB-UniRule"/>
</dbReference>
<dbReference type="GO" id="GO:0006633">
    <property type="term" value="P:fatty acid biosynthetic process"/>
    <property type="evidence" value="ECO:0007669"/>
    <property type="project" value="UniProtKB-KW"/>
</dbReference>
<dbReference type="GO" id="GO:2001295">
    <property type="term" value="P:malonyl-CoA biosynthetic process"/>
    <property type="evidence" value="ECO:0007669"/>
    <property type="project" value="UniProtKB-UniRule"/>
</dbReference>
<dbReference type="Gene3D" id="3.90.226.10">
    <property type="entry name" value="2-enoyl-CoA Hydratase, Chain A, domain 1"/>
    <property type="match status" value="1"/>
</dbReference>
<dbReference type="HAMAP" id="MF_00823">
    <property type="entry name" value="AcetylCoA_CT_alpha"/>
    <property type="match status" value="1"/>
</dbReference>
<dbReference type="InterPro" id="IPR001095">
    <property type="entry name" value="Acetyl_CoA_COase_a_su"/>
</dbReference>
<dbReference type="InterPro" id="IPR029045">
    <property type="entry name" value="ClpP/crotonase-like_dom_sf"/>
</dbReference>
<dbReference type="InterPro" id="IPR011763">
    <property type="entry name" value="COA_CT_C"/>
</dbReference>
<dbReference type="NCBIfam" id="TIGR00513">
    <property type="entry name" value="accA"/>
    <property type="match status" value="1"/>
</dbReference>
<dbReference type="NCBIfam" id="NF041504">
    <property type="entry name" value="AccA_sub"/>
    <property type="match status" value="1"/>
</dbReference>
<dbReference type="NCBIfam" id="NF004344">
    <property type="entry name" value="PRK05724.1"/>
    <property type="match status" value="1"/>
</dbReference>
<dbReference type="PANTHER" id="PTHR42853">
    <property type="entry name" value="ACETYL-COENZYME A CARBOXYLASE CARBOXYL TRANSFERASE SUBUNIT ALPHA"/>
    <property type="match status" value="1"/>
</dbReference>
<dbReference type="PANTHER" id="PTHR42853:SF3">
    <property type="entry name" value="ACETYL-COENZYME A CARBOXYLASE CARBOXYL TRANSFERASE SUBUNIT ALPHA, CHLOROPLASTIC"/>
    <property type="match status" value="1"/>
</dbReference>
<dbReference type="Pfam" id="PF03255">
    <property type="entry name" value="ACCA"/>
    <property type="match status" value="1"/>
</dbReference>
<dbReference type="PRINTS" id="PR01069">
    <property type="entry name" value="ACCCTRFRASEA"/>
</dbReference>
<dbReference type="SUPFAM" id="SSF52096">
    <property type="entry name" value="ClpP/crotonase"/>
    <property type="match status" value="1"/>
</dbReference>
<dbReference type="PROSITE" id="PS50989">
    <property type="entry name" value="COA_CT_CTER"/>
    <property type="match status" value="1"/>
</dbReference>
<keyword id="KW-0067">ATP-binding</keyword>
<keyword id="KW-0963">Cytoplasm</keyword>
<keyword id="KW-0275">Fatty acid biosynthesis</keyword>
<keyword id="KW-0276">Fatty acid metabolism</keyword>
<keyword id="KW-0444">Lipid biosynthesis</keyword>
<keyword id="KW-0443">Lipid metabolism</keyword>
<keyword id="KW-0547">Nucleotide-binding</keyword>
<keyword id="KW-1185">Reference proteome</keyword>
<keyword id="KW-0808">Transferase</keyword>
<reference key="1">
    <citation type="journal article" date="2000" name="Science">
        <title>Complete genome sequence of Neisseria meningitidis serogroup B strain MC58.</title>
        <authorList>
            <person name="Tettelin H."/>
            <person name="Saunders N.J."/>
            <person name="Heidelberg J.F."/>
            <person name="Jeffries A.C."/>
            <person name="Nelson K.E."/>
            <person name="Eisen J.A."/>
            <person name="Ketchum K.A."/>
            <person name="Hood D.W."/>
            <person name="Peden J.F."/>
            <person name="Dodson R.J."/>
            <person name="Nelson W.C."/>
            <person name="Gwinn M.L."/>
            <person name="DeBoy R.T."/>
            <person name="Peterson J.D."/>
            <person name="Hickey E.K."/>
            <person name="Haft D.H."/>
            <person name="Salzberg S.L."/>
            <person name="White O."/>
            <person name="Fleischmann R.D."/>
            <person name="Dougherty B.A."/>
            <person name="Mason T.M."/>
            <person name="Ciecko A."/>
            <person name="Parksey D.S."/>
            <person name="Blair E."/>
            <person name="Cittone H."/>
            <person name="Clark E.B."/>
            <person name="Cotton M.D."/>
            <person name="Utterback T.R."/>
            <person name="Khouri H.M."/>
            <person name="Qin H."/>
            <person name="Vamathevan J.J."/>
            <person name="Gill J."/>
            <person name="Scarlato V."/>
            <person name="Masignani V."/>
            <person name="Pizza M."/>
            <person name="Grandi G."/>
            <person name="Sun L."/>
            <person name="Smith H.O."/>
            <person name="Fraser C.M."/>
            <person name="Moxon E.R."/>
            <person name="Rappuoli R."/>
            <person name="Venter J.C."/>
        </authorList>
    </citation>
    <scope>NUCLEOTIDE SEQUENCE [LARGE SCALE GENOMIC DNA]</scope>
    <source>
        <strain>ATCC BAA-335 / MC58</strain>
    </source>
</reference>
<proteinExistence type="inferred from homology"/>
<protein>
    <recommendedName>
        <fullName evidence="1">Acetyl-coenzyme A carboxylase carboxyl transferase subunit alpha</fullName>
        <shortName evidence="1">ACCase subunit alpha</shortName>
        <shortName evidence="1">Acetyl-CoA carboxylase carboxyltransferase subunit alpha</shortName>
        <ecNumber evidence="1">2.1.3.15</ecNumber>
    </recommendedName>
</protein>
<evidence type="ECO:0000255" key="1">
    <source>
        <dbReference type="HAMAP-Rule" id="MF_00823"/>
    </source>
</evidence>
<evidence type="ECO:0000255" key="2">
    <source>
        <dbReference type="PROSITE-ProRule" id="PRU01137"/>
    </source>
</evidence>